<reference key="1">
    <citation type="journal article" date="2009" name="PLoS Pathog.">
        <title>Genomic evidence for the evolution of Streptococcus equi: host restriction, increased virulence, and genetic exchange with human pathogens.</title>
        <authorList>
            <person name="Holden M.T.G."/>
            <person name="Heather Z."/>
            <person name="Paillot R."/>
            <person name="Steward K.F."/>
            <person name="Webb K."/>
            <person name="Ainslie F."/>
            <person name="Jourdan T."/>
            <person name="Bason N.C."/>
            <person name="Holroyd N.E."/>
            <person name="Mungall K."/>
            <person name="Quail M.A."/>
            <person name="Sanders M."/>
            <person name="Simmonds M."/>
            <person name="Willey D."/>
            <person name="Brooks K."/>
            <person name="Aanensen D.M."/>
            <person name="Spratt B.G."/>
            <person name="Jolley K.A."/>
            <person name="Maiden M.C.J."/>
            <person name="Kehoe M."/>
            <person name="Chanter N."/>
            <person name="Bentley S.D."/>
            <person name="Robinson C."/>
            <person name="Maskell D.J."/>
            <person name="Parkhill J."/>
            <person name="Waller A.S."/>
        </authorList>
    </citation>
    <scope>NUCLEOTIDE SEQUENCE [LARGE SCALE GENOMIC DNA]</scope>
    <source>
        <strain>4047</strain>
    </source>
</reference>
<organism>
    <name type="scientific">Streptococcus equi subsp. equi (strain 4047)</name>
    <dbReference type="NCBI Taxonomy" id="553482"/>
    <lineage>
        <taxon>Bacteria</taxon>
        <taxon>Bacillati</taxon>
        <taxon>Bacillota</taxon>
        <taxon>Bacilli</taxon>
        <taxon>Lactobacillales</taxon>
        <taxon>Streptococcaceae</taxon>
        <taxon>Streptococcus</taxon>
    </lineage>
</organism>
<protein>
    <recommendedName>
        <fullName evidence="1">Small ribosomal subunit protein uS2</fullName>
    </recommendedName>
    <alternativeName>
        <fullName evidence="2">30S ribosomal protein S2</fullName>
    </alternativeName>
</protein>
<keyword id="KW-0687">Ribonucleoprotein</keyword>
<keyword id="KW-0689">Ribosomal protein</keyword>
<name>RS2_STRE4</name>
<dbReference type="EMBL" id="FM204883">
    <property type="protein sequence ID" value="CAW92092.1"/>
    <property type="molecule type" value="Genomic_DNA"/>
</dbReference>
<dbReference type="RefSeq" id="WP_012677249.1">
    <property type="nucleotide sequence ID" value="NC_012471.1"/>
</dbReference>
<dbReference type="SMR" id="C0MAG7"/>
<dbReference type="GeneID" id="83703997"/>
<dbReference type="KEGG" id="seu:SEQ_0130"/>
<dbReference type="HOGENOM" id="CLU_040318_1_2_9"/>
<dbReference type="OrthoDB" id="9808036at2"/>
<dbReference type="Proteomes" id="UP000001365">
    <property type="component" value="Chromosome"/>
</dbReference>
<dbReference type="GO" id="GO:0022627">
    <property type="term" value="C:cytosolic small ribosomal subunit"/>
    <property type="evidence" value="ECO:0007669"/>
    <property type="project" value="TreeGrafter"/>
</dbReference>
<dbReference type="GO" id="GO:0003735">
    <property type="term" value="F:structural constituent of ribosome"/>
    <property type="evidence" value="ECO:0007669"/>
    <property type="project" value="InterPro"/>
</dbReference>
<dbReference type="GO" id="GO:0006412">
    <property type="term" value="P:translation"/>
    <property type="evidence" value="ECO:0007669"/>
    <property type="project" value="UniProtKB-UniRule"/>
</dbReference>
<dbReference type="CDD" id="cd01425">
    <property type="entry name" value="RPS2"/>
    <property type="match status" value="1"/>
</dbReference>
<dbReference type="FunFam" id="1.10.287.610:FF:000001">
    <property type="entry name" value="30S ribosomal protein S2"/>
    <property type="match status" value="1"/>
</dbReference>
<dbReference type="Gene3D" id="3.40.50.10490">
    <property type="entry name" value="Glucose-6-phosphate isomerase like protein, domain 1"/>
    <property type="match status" value="1"/>
</dbReference>
<dbReference type="Gene3D" id="1.10.287.610">
    <property type="entry name" value="Helix hairpin bin"/>
    <property type="match status" value="1"/>
</dbReference>
<dbReference type="HAMAP" id="MF_00291_B">
    <property type="entry name" value="Ribosomal_uS2_B"/>
    <property type="match status" value="1"/>
</dbReference>
<dbReference type="InterPro" id="IPR001865">
    <property type="entry name" value="Ribosomal_uS2"/>
</dbReference>
<dbReference type="InterPro" id="IPR005706">
    <property type="entry name" value="Ribosomal_uS2_bac/mit/plastid"/>
</dbReference>
<dbReference type="InterPro" id="IPR018130">
    <property type="entry name" value="Ribosomal_uS2_CS"/>
</dbReference>
<dbReference type="InterPro" id="IPR023591">
    <property type="entry name" value="Ribosomal_uS2_flav_dom_sf"/>
</dbReference>
<dbReference type="NCBIfam" id="TIGR01011">
    <property type="entry name" value="rpsB_bact"/>
    <property type="match status" value="1"/>
</dbReference>
<dbReference type="PANTHER" id="PTHR12534">
    <property type="entry name" value="30S RIBOSOMAL PROTEIN S2 PROKARYOTIC AND ORGANELLAR"/>
    <property type="match status" value="1"/>
</dbReference>
<dbReference type="PANTHER" id="PTHR12534:SF0">
    <property type="entry name" value="SMALL RIBOSOMAL SUBUNIT PROTEIN US2M"/>
    <property type="match status" value="1"/>
</dbReference>
<dbReference type="Pfam" id="PF00318">
    <property type="entry name" value="Ribosomal_S2"/>
    <property type="match status" value="1"/>
</dbReference>
<dbReference type="PRINTS" id="PR00395">
    <property type="entry name" value="RIBOSOMALS2"/>
</dbReference>
<dbReference type="SUPFAM" id="SSF52313">
    <property type="entry name" value="Ribosomal protein S2"/>
    <property type="match status" value="1"/>
</dbReference>
<dbReference type="PROSITE" id="PS00962">
    <property type="entry name" value="RIBOSOMAL_S2_1"/>
    <property type="match status" value="1"/>
</dbReference>
<comment type="similarity">
    <text evidence="1">Belongs to the universal ribosomal protein uS2 family.</text>
</comment>
<sequence length="256" mass="28516">MAVISMKQLLEAGVHFGHQTRRWNPKMAKYIFTERNGIHVIDLQQTVKLADQAYEFVRDAAANDAVILFVGTKKQAAEAVADEATRAGQYFINHRWLGGTLTNWGTIQKRIARLKEIKRMEEEGTFEVLPKKEVALLNKQRARLEKFLGGIEDMPRIPDVMYVVDPHKEQIAVKEAKKLGIPVVAMVDTNADPDDIDVIIPANDDAIRAVKLITAKLADAVIEGRQGEDAEVAFEADTQAESIEEIVEVVEGSNEA</sequence>
<feature type="chain" id="PRO_1000194346" description="Small ribosomal subunit protein uS2">
    <location>
        <begin position="1"/>
        <end position="256"/>
    </location>
</feature>
<gene>
    <name evidence="1" type="primary">rpsB</name>
    <name type="ordered locus">SEQ_0130</name>
</gene>
<accession>C0MAG7</accession>
<proteinExistence type="inferred from homology"/>
<evidence type="ECO:0000255" key="1">
    <source>
        <dbReference type="HAMAP-Rule" id="MF_00291"/>
    </source>
</evidence>
<evidence type="ECO:0000305" key="2"/>